<evidence type="ECO:0000255" key="1">
    <source>
        <dbReference type="HAMAP-Rule" id="MF_01014"/>
    </source>
</evidence>
<protein>
    <recommendedName>
        <fullName evidence="1">1-(5-phosphoribosyl)-5-[(5-phosphoribosylamino)methylideneamino] imidazole-4-carboxamide isomerase</fullName>
        <ecNumber evidence="1">5.3.1.16</ecNumber>
    </recommendedName>
    <alternativeName>
        <fullName evidence="1">Phosphoribosylformimino-5-aminoimidazole carboxamide ribotide isomerase</fullName>
    </alternativeName>
</protein>
<proteinExistence type="inferred from homology"/>
<reference key="1">
    <citation type="submission" date="2006-02" db="EMBL/GenBank/DDBJ databases">
        <title>Complete sequence of chromosome of Jannaschia sp. CCS1.</title>
        <authorList>
            <consortium name="US DOE Joint Genome Institute"/>
            <person name="Copeland A."/>
            <person name="Lucas S."/>
            <person name="Lapidus A."/>
            <person name="Barry K."/>
            <person name="Detter J.C."/>
            <person name="Glavina del Rio T."/>
            <person name="Hammon N."/>
            <person name="Israni S."/>
            <person name="Pitluck S."/>
            <person name="Brettin T."/>
            <person name="Bruce D."/>
            <person name="Han C."/>
            <person name="Tapia R."/>
            <person name="Gilna P."/>
            <person name="Chertkov O."/>
            <person name="Saunders E."/>
            <person name="Schmutz J."/>
            <person name="Larimer F."/>
            <person name="Land M."/>
            <person name="Kyrpides N."/>
            <person name="Lykidis A."/>
            <person name="Moran M.A."/>
            <person name="Belas R."/>
            <person name="Ye W."/>
            <person name="Buchan A."/>
            <person name="Gonzalez J.M."/>
            <person name="Schell M.A."/>
            <person name="Richardson P."/>
        </authorList>
    </citation>
    <scope>NUCLEOTIDE SEQUENCE [LARGE SCALE GENOMIC DNA]</scope>
    <source>
        <strain>CCS1</strain>
    </source>
</reference>
<sequence length="238" mass="24451">MILYPAIDLKDGNAVRLLRGEMSDATVFNTDPAAQARAFQDAGCDWLHLVDLNGAFAGEPVNGAAVEAILAATSVPTQLGGGIRDMATIEGWLTRGIARVILGTVAVEDPDLVRQAARAFPGQVAVGIDARKGRVATKGWAEETDVMVTDLARAFEDAGVAAIIYTDIDRDGAMGGPNVSATADLARATSIPVIASGGVSSLDDLHALKTTGVISGAISGRALYDGALDLSEALHALA</sequence>
<keyword id="KW-0028">Amino-acid biosynthesis</keyword>
<keyword id="KW-0963">Cytoplasm</keyword>
<keyword id="KW-0368">Histidine biosynthesis</keyword>
<keyword id="KW-0413">Isomerase</keyword>
<keyword id="KW-1185">Reference proteome</keyword>
<dbReference type="EC" id="5.3.1.16" evidence="1"/>
<dbReference type="EMBL" id="CP000264">
    <property type="protein sequence ID" value="ABD55709.1"/>
    <property type="molecule type" value="Genomic_DNA"/>
</dbReference>
<dbReference type="RefSeq" id="WP_011455913.1">
    <property type="nucleotide sequence ID" value="NC_007802.1"/>
</dbReference>
<dbReference type="SMR" id="Q28NK3"/>
<dbReference type="STRING" id="290400.Jann_2792"/>
<dbReference type="KEGG" id="jan:Jann_2792"/>
<dbReference type="eggNOG" id="COG0106">
    <property type="taxonomic scope" value="Bacteria"/>
</dbReference>
<dbReference type="HOGENOM" id="CLU_048577_1_1_5"/>
<dbReference type="OrthoDB" id="9807749at2"/>
<dbReference type="UniPathway" id="UPA00031">
    <property type="reaction ID" value="UER00009"/>
</dbReference>
<dbReference type="Proteomes" id="UP000008326">
    <property type="component" value="Chromosome"/>
</dbReference>
<dbReference type="GO" id="GO:0005737">
    <property type="term" value="C:cytoplasm"/>
    <property type="evidence" value="ECO:0007669"/>
    <property type="project" value="UniProtKB-SubCell"/>
</dbReference>
<dbReference type="GO" id="GO:0003949">
    <property type="term" value="F:1-(5-phosphoribosyl)-5-[(5-phosphoribosylamino)methylideneamino]imidazole-4-carboxamide isomerase activity"/>
    <property type="evidence" value="ECO:0007669"/>
    <property type="project" value="UniProtKB-UniRule"/>
</dbReference>
<dbReference type="GO" id="GO:0000105">
    <property type="term" value="P:L-histidine biosynthetic process"/>
    <property type="evidence" value="ECO:0007669"/>
    <property type="project" value="UniProtKB-UniRule"/>
</dbReference>
<dbReference type="GO" id="GO:0000162">
    <property type="term" value="P:L-tryptophan biosynthetic process"/>
    <property type="evidence" value="ECO:0007669"/>
    <property type="project" value="TreeGrafter"/>
</dbReference>
<dbReference type="CDD" id="cd04732">
    <property type="entry name" value="HisA"/>
    <property type="match status" value="1"/>
</dbReference>
<dbReference type="FunFam" id="3.20.20.70:FF:000009">
    <property type="entry name" value="1-(5-phosphoribosyl)-5-[(5-phosphoribosylamino)methylideneamino] imidazole-4-carboxamide isomerase"/>
    <property type="match status" value="1"/>
</dbReference>
<dbReference type="Gene3D" id="3.20.20.70">
    <property type="entry name" value="Aldolase class I"/>
    <property type="match status" value="1"/>
</dbReference>
<dbReference type="HAMAP" id="MF_01014">
    <property type="entry name" value="HisA"/>
    <property type="match status" value="1"/>
</dbReference>
<dbReference type="InterPro" id="IPR013785">
    <property type="entry name" value="Aldolase_TIM"/>
</dbReference>
<dbReference type="InterPro" id="IPR006062">
    <property type="entry name" value="His_biosynth"/>
</dbReference>
<dbReference type="InterPro" id="IPR006063">
    <property type="entry name" value="HisA_bact_arch"/>
</dbReference>
<dbReference type="InterPro" id="IPR044524">
    <property type="entry name" value="Isoase_HisA-like"/>
</dbReference>
<dbReference type="InterPro" id="IPR023016">
    <property type="entry name" value="Isoase_HisA-like_bact"/>
</dbReference>
<dbReference type="InterPro" id="IPR011060">
    <property type="entry name" value="RibuloseP-bd_barrel"/>
</dbReference>
<dbReference type="NCBIfam" id="TIGR00007">
    <property type="entry name" value="1-(5-phosphoribosyl)-5-[(5-phosphoribosylamino)methylideneamino]imidazole-4-carboxamide isomerase"/>
    <property type="match status" value="1"/>
</dbReference>
<dbReference type="NCBIfam" id="NF010112">
    <property type="entry name" value="PRK13585.1"/>
    <property type="match status" value="1"/>
</dbReference>
<dbReference type="PANTHER" id="PTHR43090">
    <property type="entry name" value="1-(5-PHOSPHORIBOSYL)-5-[(5-PHOSPHORIBOSYLAMINO)METHYLIDENEAMINO] IMIDAZOLE-4-CARBOXAMIDE ISOMERASE"/>
    <property type="match status" value="1"/>
</dbReference>
<dbReference type="PANTHER" id="PTHR43090:SF2">
    <property type="entry name" value="1-(5-PHOSPHORIBOSYL)-5-[(5-PHOSPHORIBOSYLAMINO)METHYLIDENEAMINO] IMIDAZOLE-4-CARBOXAMIDE ISOMERASE"/>
    <property type="match status" value="1"/>
</dbReference>
<dbReference type="Pfam" id="PF00977">
    <property type="entry name" value="His_biosynth"/>
    <property type="match status" value="1"/>
</dbReference>
<dbReference type="SUPFAM" id="SSF51366">
    <property type="entry name" value="Ribulose-phoshate binding barrel"/>
    <property type="match status" value="1"/>
</dbReference>
<comment type="catalytic activity">
    <reaction evidence="1">
        <text>1-(5-phospho-beta-D-ribosyl)-5-[(5-phospho-beta-D-ribosylamino)methylideneamino]imidazole-4-carboxamide = 5-[(5-phospho-1-deoxy-D-ribulos-1-ylimino)methylamino]-1-(5-phospho-beta-D-ribosyl)imidazole-4-carboxamide</text>
        <dbReference type="Rhea" id="RHEA:15469"/>
        <dbReference type="ChEBI" id="CHEBI:58435"/>
        <dbReference type="ChEBI" id="CHEBI:58525"/>
        <dbReference type="EC" id="5.3.1.16"/>
    </reaction>
</comment>
<comment type="pathway">
    <text evidence="1">Amino-acid biosynthesis; L-histidine biosynthesis; L-histidine from 5-phospho-alpha-D-ribose 1-diphosphate: step 4/9.</text>
</comment>
<comment type="subcellular location">
    <subcellularLocation>
        <location evidence="1">Cytoplasm</location>
    </subcellularLocation>
</comment>
<comment type="similarity">
    <text evidence="1">Belongs to the HisA/HisF family.</text>
</comment>
<organism>
    <name type="scientific">Jannaschia sp. (strain CCS1)</name>
    <dbReference type="NCBI Taxonomy" id="290400"/>
    <lineage>
        <taxon>Bacteria</taxon>
        <taxon>Pseudomonadati</taxon>
        <taxon>Pseudomonadota</taxon>
        <taxon>Alphaproteobacteria</taxon>
        <taxon>Rhodobacterales</taxon>
        <taxon>Roseobacteraceae</taxon>
        <taxon>Jannaschia</taxon>
    </lineage>
</organism>
<feature type="chain" id="PRO_0000290482" description="1-(5-phosphoribosyl)-5-[(5-phosphoribosylamino)methylideneamino] imidazole-4-carboxamide isomerase">
    <location>
        <begin position="1"/>
        <end position="238"/>
    </location>
</feature>
<feature type="active site" description="Proton acceptor" evidence="1">
    <location>
        <position position="8"/>
    </location>
</feature>
<feature type="active site" description="Proton donor" evidence="1">
    <location>
        <position position="129"/>
    </location>
</feature>
<name>HIS4_JANSC</name>
<gene>
    <name evidence="1" type="primary">hisA</name>
    <name type="ordered locus">Jann_2792</name>
</gene>
<accession>Q28NK3</accession>